<proteinExistence type="inferred from homology"/>
<comment type="function">
    <text evidence="1">Involved in the oxidation of myo-inositol (MI) and D-chiro-inositol (DCI) to 2-keto-myo-inositol (2KMI or 2-inosose) and 1-keto-D-chiro-inositol (1KDCI), respectively.</text>
</comment>
<comment type="catalytic activity">
    <reaction evidence="1">
        <text>myo-inositol + NAD(+) = scyllo-inosose + NADH + H(+)</text>
        <dbReference type="Rhea" id="RHEA:16949"/>
        <dbReference type="ChEBI" id="CHEBI:15378"/>
        <dbReference type="ChEBI" id="CHEBI:17268"/>
        <dbReference type="ChEBI" id="CHEBI:17811"/>
        <dbReference type="ChEBI" id="CHEBI:57540"/>
        <dbReference type="ChEBI" id="CHEBI:57945"/>
        <dbReference type="EC" id="1.1.1.18"/>
    </reaction>
</comment>
<comment type="catalytic activity">
    <reaction evidence="1">
        <text>1D-chiro-inositol + NAD(+) = scyllo-inosine + NADH + H(+)</text>
        <dbReference type="Rhea" id="RHEA:25832"/>
        <dbReference type="ChEBI" id="CHEBI:15378"/>
        <dbReference type="ChEBI" id="CHEBI:27372"/>
        <dbReference type="ChEBI" id="CHEBI:50920"/>
        <dbReference type="ChEBI" id="CHEBI:57540"/>
        <dbReference type="ChEBI" id="CHEBI:57945"/>
        <dbReference type="EC" id="1.1.1.369"/>
    </reaction>
</comment>
<comment type="pathway">
    <text evidence="1">Polyol metabolism; myo-inositol degradation into acetyl-CoA; acetyl-CoA from myo-inositol: step 1/7.</text>
</comment>
<comment type="subunit">
    <text evidence="1">Homotetramer.</text>
</comment>
<comment type="similarity">
    <text evidence="1">Belongs to the Gfo/Idh/MocA family.</text>
</comment>
<keyword id="KW-0520">NAD</keyword>
<keyword id="KW-0560">Oxidoreductase</keyword>
<keyword id="KW-1185">Reference proteome</keyword>
<protein>
    <recommendedName>
        <fullName evidence="1">Inositol 2-dehydrogenase/D-chiro-inositol 3-dehydrogenase</fullName>
        <ecNumber evidence="1">1.1.1.18</ecNumber>
        <ecNumber evidence="1">1.1.1.369</ecNumber>
    </recommendedName>
    <alternativeName>
        <fullName evidence="1">Myo-inositol 2-dehydrogenase/D-chiro-inositol 3-dehydrogenase</fullName>
        <shortName evidence="1">MI 2-dehydrogenase/DCI 3-dehydrogenase</shortName>
    </alternativeName>
</protein>
<organism>
    <name type="scientific">Shouchella clausii (strain KSM-K16)</name>
    <name type="common">Alkalihalobacillus clausii</name>
    <dbReference type="NCBI Taxonomy" id="66692"/>
    <lineage>
        <taxon>Bacteria</taxon>
        <taxon>Bacillati</taxon>
        <taxon>Bacillota</taxon>
        <taxon>Bacilli</taxon>
        <taxon>Bacillales</taxon>
        <taxon>Bacillaceae</taxon>
        <taxon>Shouchella</taxon>
    </lineage>
</organism>
<accession>Q5WKY6</accession>
<evidence type="ECO:0000255" key="1">
    <source>
        <dbReference type="HAMAP-Rule" id="MF_01671"/>
    </source>
</evidence>
<evidence type="ECO:0000256" key="2">
    <source>
        <dbReference type="SAM" id="MobiDB-lite"/>
    </source>
</evidence>
<sequence>MTVRVGVIGTGAIGQDHIRRLECKLSGAKVTAVTDVNQDLARKVANTYAKQATVYANDRELIAARDVDAVLVASWGPAHEASVLAALEAGKRVFCEKPLATTADGCMRIVEAEMAHGKRLVQVGFMRRFDSGYLQLKQALEQELVGEPLMVRCIHRNVESAESYTTDMAITDTLIHEIDVLHWLLNDEYQHVRVLYPKKTKHALPHLQDPQLVLLETKKGVIIQAEIFVNCKYGYDIQCEIAGEEGVISLPDVPAVRLCSNGRKGTEVLQDWKKRFEAAYDVELQAFIDDGLKDEPASGPSAWDGYVAAVTADACVKAQESGREESIELPKKPAFYQHSAATPEQV</sequence>
<name>IOLG_SHOC1</name>
<gene>
    <name evidence="1" type="primary">iolG</name>
    <name type="ordered locus">ABC0427</name>
</gene>
<reference key="1">
    <citation type="submission" date="2003-10" db="EMBL/GenBank/DDBJ databases">
        <title>The complete genome sequence of the alkaliphilic Bacillus clausii KSM-K16.</title>
        <authorList>
            <person name="Takaki Y."/>
            <person name="Kageyama Y."/>
            <person name="Shimamura S."/>
            <person name="Suzuki H."/>
            <person name="Nishi S."/>
            <person name="Hatada Y."/>
            <person name="Kawai S."/>
            <person name="Ito S."/>
            <person name="Horikoshi K."/>
        </authorList>
    </citation>
    <scope>NUCLEOTIDE SEQUENCE [LARGE SCALE GENOMIC DNA]</scope>
    <source>
        <strain>KSM-K16</strain>
    </source>
</reference>
<dbReference type="EC" id="1.1.1.18" evidence="1"/>
<dbReference type="EC" id="1.1.1.369" evidence="1"/>
<dbReference type="EMBL" id="AP006627">
    <property type="protein sequence ID" value="BAD62969.1"/>
    <property type="molecule type" value="Genomic_DNA"/>
</dbReference>
<dbReference type="RefSeq" id="WP_011245288.1">
    <property type="nucleotide sequence ID" value="NC_006582.1"/>
</dbReference>
<dbReference type="SMR" id="Q5WKY6"/>
<dbReference type="STRING" id="66692.ABC0427"/>
<dbReference type="KEGG" id="bcl:ABC0427"/>
<dbReference type="eggNOG" id="COG0673">
    <property type="taxonomic scope" value="Bacteria"/>
</dbReference>
<dbReference type="HOGENOM" id="CLU_023194_0_1_9"/>
<dbReference type="OrthoDB" id="9815825at2"/>
<dbReference type="UniPathway" id="UPA00076">
    <property type="reaction ID" value="UER00143"/>
</dbReference>
<dbReference type="Proteomes" id="UP000001168">
    <property type="component" value="Chromosome"/>
</dbReference>
<dbReference type="GO" id="GO:0050112">
    <property type="term" value="F:inositol 2-dehydrogenase (NAD+) activity"/>
    <property type="evidence" value="ECO:0007669"/>
    <property type="project" value="UniProtKB-UniRule"/>
</dbReference>
<dbReference type="GO" id="GO:0000166">
    <property type="term" value="F:nucleotide binding"/>
    <property type="evidence" value="ECO:0007669"/>
    <property type="project" value="InterPro"/>
</dbReference>
<dbReference type="GO" id="GO:0019310">
    <property type="term" value="P:inositol catabolic process"/>
    <property type="evidence" value="ECO:0007669"/>
    <property type="project" value="UniProtKB-UniRule"/>
</dbReference>
<dbReference type="Gene3D" id="3.30.360.10">
    <property type="entry name" value="Dihydrodipicolinate Reductase, domain 2"/>
    <property type="match status" value="1"/>
</dbReference>
<dbReference type="Gene3D" id="3.40.50.720">
    <property type="entry name" value="NAD(P)-binding Rossmann-like Domain"/>
    <property type="match status" value="1"/>
</dbReference>
<dbReference type="HAMAP" id="MF_01671">
    <property type="entry name" value="IolG"/>
    <property type="match status" value="1"/>
</dbReference>
<dbReference type="InterPro" id="IPR050424">
    <property type="entry name" value="Gfo-Idh-MocA_inositol_DH"/>
</dbReference>
<dbReference type="InterPro" id="IPR004104">
    <property type="entry name" value="Gfo/Idh/MocA-like_OxRdtase_C"/>
</dbReference>
<dbReference type="InterPro" id="IPR000683">
    <property type="entry name" value="Gfo/Idh/MocA-like_OxRdtase_N"/>
</dbReference>
<dbReference type="InterPro" id="IPR023794">
    <property type="entry name" value="MI/DCI_dehydrogenase"/>
</dbReference>
<dbReference type="InterPro" id="IPR036291">
    <property type="entry name" value="NAD(P)-bd_dom_sf"/>
</dbReference>
<dbReference type="PANTHER" id="PTHR43593">
    <property type="match status" value="1"/>
</dbReference>
<dbReference type="PANTHER" id="PTHR43593:SF1">
    <property type="entry name" value="INOSITOL 2-DEHYDROGENASE"/>
    <property type="match status" value="1"/>
</dbReference>
<dbReference type="Pfam" id="PF01408">
    <property type="entry name" value="GFO_IDH_MocA"/>
    <property type="match status" value="1"/>
</dbReference>
<dbReference type="Pfam" id="PF02894">
    <property type="entry name" value="GFO_IDH_MocA_C"/>
    <property type="match status" value="1"/>
</dbReference>
<dbReference type="SUPFAM" id="SSF55347">
    <property type="entry name" value="Glyceraldehyde-3-phosphate dehydrogenase-like, C-terminal domain"/>
    <property type="match status" value="1"/>
</dbReference>
<dbReference type="SUPFAM" id="SSF51735">
    <property type="entry name" value="NAD(P)-binding Rossmann-fold domains"/>
    <property type="match status" value="1"/>
</dbReference>
<feature type="chain" id="PRO_0000352555" description="Inositol 2-dehydrogenase/D-chiro-inositol 3-dehydrogenase">
    <location>
        <begin position="1"/>
        <end position="346"/>
    </location>
</feature>
<feature type="region of interest" description="Disordered" evidence="2">
    <location>
        <begin position="322"/>
        <end position="346"/>
    </location>
</feature>
<feature type="compositionally biased region" description="Basic and acidic residues" evidence="2">
    <location>
        <begin position="322"/>
        <end position="331"/>
    </location>
</feature>